<sequence length="296" mass="31856">MTDIHIQDGDLSSLKDKVVVITGGSSGIGLATTNLLLDLGAKVVIGDLQPPTTRVDSERCSFHKVDVTVWSDQLTLFKEARELHGRIDHVFANAGVGPKADYLSTALDQNGDLVEPTFLTLDVNLKAVIYTATIACYYMREEQQSPAGGSIVIVSSVAGVSRFRAVDYATAKHGNLGFARGLHQRLTAENSPTRVNLIAPSWTNTGFMPPQIMAAVGVEPQEPASVGRAAAYLMADDSRKGQMIHIAKGRYREVEESIMLPAAEKVVDVENGGVMEDDTLAKIIETMGIFKAKATQ</sequence>
<accession>A0A455R5K2</accession>
<evidence type="ECO:0000250" key="1">
    <source>
        <dbReference type="UniProtKB" id="L0E2Z4"/>
    </source>
</evidence>
<evidence type="ECO:0000250" key="2">
    <source>
        <dbReference type="UniProtKB" id="O93868"/>
    </source>
</evidence>
<evidence type="ECO:0000255" key="3">
    <source>
        <dbReference type="PROSITE-ProRule" id="PRU10001"/>
    </source>
</evidence>
<evidence type="ECO:0000269" key="4">
    <source>
    </source>
</evidence>
<evidence type="ECO:0000269" key="5">
    <source>
    </source>
</evidence>
<evidence type="ECO:0000269" key="6">
    <source>
    </source>
</evidence>
<evidence type="ECO:0000269" key="7">
    <source>
    </source>
</evidence>
<evidence type="ECO:0000269" key="8">
    <source>
    </source>
</evidence>
<evidence type="ECO:0000303" key="9">
    <source>
    </source>
</evidence>
<evidence type="ECO:0000305" key="10"/>
<feature type="chain" id="PRO_0000449005" description="Short-chain dehydrogenase/reductase ascJ">
    <location>
        <begin position="1"/>
        <end position="296"/>
    </location>
</feature>
<feature type="active site" description="Proton donor" evidence="2">
    <location>
        <position position="155"/>
    </location>
</feature>
<feature type="active site" description="Proton acceptor" evidence="3">
    <location>
        <position position="168"/>
    </location>
</feature>
<feature type="active site" description="Lowers pKa of active site Tyr" evidence="2">
    <location>
        <position position="172"/>
    </location>
</feature>
<feature type="binding site" evidence="1">
    <location>
        <position position="28"/>
    </location>
    <ligand>
        <name>NADP(+)</name>
        <dbReference type="ChEBI" id="CHEBI:58349"/>
    </ligand>
</feature>
<feature type="binding site" evidence="1">
    <location>
        <position position="66"/>
    </location>
    <ligand>
        <name>NADP(+)</name>
        <dbReference type="ChEBI" id="CHEBI:58349"/>
    </ligand>
</feature>
<feature type="binding site" evidence="2">
    <location>
        <position position="93"/>
    </location>
    <ligand>
        <name>NADP(+)</name>
        <dbReference type="ChEBI" id="CHEBI:58349"/>
    </ligand>
</feature>
<feature type="binding site" evidence="2">
    <location>
        <position position="168"/>
    </location>
    <ligand>
        <name>NADP(+)</name>
        <dbReference type="ChEBI" id="CHEBI:58349"/>
    </ligand>
</feature>
<feature type="binding site" evidence="2">
    <location>
        <position position="172"/>
    </location>
    <ligand>
        <name>NADP(+)</name>
        <dbReference type="ChEBI" id="CHEBI:58349"/>
    </ligand>
</feature>
<feature type="binding site" evidence="1">
    <location>
        <position position="205"/>
    </location>
    <ligand>
        <name>NADP(+)</name>
        <dbReference type="ChEBI" id="CHEBI:58349"/>
    </ligand>
</feature>
<keyword id="KW-0521">NADP</keyword>
<keyword id="KW-0560">Oxidoreductase</keyword>
<dbReference type="EC" id="1.1.99.-" evidence="7 8"/>
<dbReference type="EMBL" id="LC406757">
    <property type="protein sequence ID" value="BBF25320.1"/>
    <property type="molecule type" value="Genomic_DNA"/>
</dbReference>
<dbReference type="SMR" id="A0A455R5K2"/>
<dbReference type="UniPathway" id="UPA00213"/>
<dbReference type="GO" id="GO:0016491">
    <property type="term" value="F:oxidoreductase activity"/>
    <property type="evidence" value="ECO:0007669"/>
    <property type="project" value="UniProtKB-KW"/>
</dbReference>
<dbReference type="GO" id="GO:0016114">
    <property type="term" value="P:terpenoid biosynthetic process"/>
    <property type="evidence" value="ECO:0007669"/>
    <property type="project" value="UniProtKB-UniPathway"/>
</dbReference>
<dbReference type="Gene3D" id="3.40.50.720">
    <property type="entry name" value="NAD(P)-binding Rossmann-like Domain"/>
    <property type="match status" value="1"/>
</dbReference>
<dbReference type="InterPro" id="IPR036291">
    <property type="entry name" value="NAD(P)-bd_dom_sf"/>
</dbReference>
<dbReference type="InterPro" id="IPR002347">
    <property type="entry name" value="SDR_fam"/>
</dbReference>
<dbReference type="PANTHER" id="PTHR43180">
    <property type="entry name" value="3-OXOACYL-(ACYL-CARRIER-PROTEIN) REDUCTASE (AFU_ORTHOLOGUE AFUA_6G11210)"/>
    <property type="match status" value="1"/>
</dbReference>
<dbReference type="PANTHER" id="PTHR43180:SF10">
    <property type="entry name" value="NAD(P)-BINDING PROTEIN"/>
    <property type="match status" value="1"/>
</dbReference>
<dbReference type="Pfam" id="PF00106">
    <property type="entry name" value="adh_short"/>
    <property type="match status" value="1"/>
</dbReference>
<dbReference type="PRINTS" id="PR00081">
    <property type="entry name" value="GDHRDH"/>
</dbReference>
<dbReference type="SUPFAM" id="SSF51735">
    <property type="entry name" value="NAD(P)-binding Rossmann-fold domains"/>
    <property type="match status" value="1"/>
</dbReference>
<proteinExistence type="evidence at protein level"/>
<gene>
    <name evidence="9" type="primary">ascJ</name>
</gene>
<reference key="1">
    <citation type="journal article" date="2019" name="Proc. Natl. Acad. Sci. U.S.A.">
        <title>Complete biosynthetic pathways of ascofuranone and ascochlorin in Acremonium egyptiacum.</title>
        <authorList>
            <person name="Araki Y."/>
            <person name="Awakawa T."/>
            <person name="Matsuzaki M."/>
            <person name="Cho R."/>
            <person name="Matsuda Y."/>
            <person name="Hoshino S."/>
            <person name="Shinohara Y."/>
            <person name="Yamamoto M."/>
            <person name="Kido Y."/>
            <person name="Inaoka D.K."/>
            <person name="Nagamune K."/>
            <person name="Ito K."/>
            <person name="Abe I."/>
            <person name="Kita K."/>
        </authorList>
    </citation>
    <scope>NUCLEOTIDE SEQUENCE [GENOMIC DNA]</scope>
    <scope>FUNCTION</scope>
    <scope>CATALYTIC ACTIVITY</scope>
    <scope>INDUCTION</scope>
    <scope>PATHWAY</scope>
    <source>
        <strain>F-1392</strain>
    </source>
</reference>
<reference key="2">
    <citation type="journal article" date="2002" name="Biochim. Biophys. Acta">
        <title>Trypanosome alternative oxidase as a target of chemotherapy.</title>
        <authorList>
            <person name="Nihei C."/>
            <person name="Fukai Y."/>
            <person name="Kita K."/>
        </authorList>
    </citation>
    <scope>BIOTECHNOLOGY</scope>
</reference>
<reference key="3">
    <citation type="journal article" date="2003" name="Parasitol. Int.">
        <title>The efficacy of ascofuranone in a consecutive treatment on Trypanosoma brucei brucei in mice.</title>
        <authorList>
            <person name="Yabu Y."/>
            <person name="Yoshida A."/>
            <person name="Suzuki T."/>
            <person name="Nihei C."/>
            <person name="Kawai K."/>
            <person name="Minagawa N."/>
            <person name="Hosokawa T."/>
            <person name="Nagai K."/>
            <person name="Kita K."/>
            <person name="Ohta N."/>
        </authorList>
    </citation>
    <scope>BIOTECHNOLOGY</scope>
</reference>
<reference key="4">
    <citation type="journal article" date="2010" name="Parasitol. Int.">
        <title>Trypanosome alternative oxidase, a potential therapeutic target for sleeping sickness, is conserved among Trypanosoma brucei subspecies.</title>
        <authorList>
            <person name="Nakamura K."/>
            <person name="Fujioka S."/>
            <person name="Fukumoto S."/>
            <person name="Inoue N."/>
            <person name="Sakamoto K."/>
            <person name="Hirata H."/>
            <person name="Kido Y."/>
            <person name="Yabu Y."/>
            <person name="Suzuki T."/>
            <person name="Watanabe Y."/>
            <person name="Saimoto H."/>
            <person name="Akiyama H."/>
            <person name="Kita K."/>
        </authorList>
    </citation>
    <scope>BIOTECHNOLOGY</scope>
</reference>
<reference key="5">
    <citation type="journal article" date="2022" name="J. Gen. Appl. Microbiol.">
        <title>Heterologous production of ascofuranone and ilicicolin A in Aspergillus sojae.</title>
        <authorList>
            <person name="Araki Y."/>
            <person name="Shinohara Y."/>
            <person name="Hara S."/>
            <person name="Sato A."/>
            <person name="Sakaue R."/>
            <person name="Gomi K."/>
            <person name="Kita K."/>
            <person name="Ito K."/>
        </authorList>
    </citation>
    <scope>FUNCTION</scope>
    <scope>CATALYTIC ACTIVITY</scope>
    <scope>PATHWAY</scope>
</reference>
<comment type="function">
    <text evidence="7 8">Short-chain dehydrogenase/reductase; part of the asc-2 gene cluster that mediates the biosynthesis of ascofuranone, a strong inhibitor of cyanide-insensitive alternative oxidases and a promising drug candidate against African trypanosomiasis (PubMed:30952781, PubMed:35418536). The first step in the pathway is performed by the non-reducing polyketide synthase ascC that produces orsellinic acid by condensing acetyl-CoA with 3 malonyl-CoA units (PubMed:30952781, PubMed:35418536). Orsellinic acid is then prenylated by the prenyltransferase ascA to yield ilicicolinic acid B (PubMed:30952781, PubMed:35418536). Ilicicolinic acid B is further reduced to ilicicolin B by the reductase ascB (PubMed:30952781, PubMed:35418536). The halogenase ascD then chlorinates ilicicolin B to produce ilicicolin A which is converted to ilicicolin A epoxide by the cytochrome P450 monooxygenase ascE that catalyzes stereoselective epoxidation of the terminal double bond of the prenyl group (PubMed:30952781, PubMed:35418536). Ilicicolin A epoxide is the last common precursor for the biosynthesis of ascofuranone and ascochlorin (PubMed:30952781, PubMed:35418536). The terpene cyclase ascF produces a monocyclic terpene, and the cyclization reaction is proposed to be initiated by protonation of the terminal epoxide of ilicicolin A epoxide to generate a monocyclic tertiarycation, which is followed by a series of hydride and methyl shifts with abstraction of proton, leading to the formation of the (14S,15R,19R)-trimethylcyclohexanone ring structure of ilicicolin C, which is finally reduced to ascochlorin by the dehydrogenase ascG (PubMed:30952781). On the other hand, ilicicolin A epoxide is hydroxylated by the cytochrome P450 monooxygenase ascH, and the resultant product is cyclized by the terpene cyclase ascI to ascofuranol via protonation-initiated epoxide ring opening, which facilitates the 6-endo-tet cyclization to form the tetrahy-drofuran ring (PubMed:30952781, PubMed:35418536). Finally, ascofuranol is oxidized into ascofuranone by ascJ (PubMed:30952781, PubMed:35418536).</text>
</comment>
<comment type="catalytic activity">
    <reaction evidence="7 8">
        <text>ascofuranol + A = ascofuranone + AH2</text>
        <dbReference type="Rhea" id="RHEA:63112"/>
        <dbReference type="ChEBI" id="CHEBI:13193"/>
        <dbReference type="ChEBI" id="CHEBI:17499"/>
        <dbReference type="ChEBI" id="CHEBI:146159"/>
        <dbReference type="ChEBI" id="CHEBI:146160"/>
    </reaction>
    <physiologicalReaction direction="left-to-right" evidence="7 8">
        <dbReference type="Rhea" id="RHEA:63113"/>
    </physiologicalReaction>
</comment>
<comment type="pathway">
    <text evidence="7 8">Secondary metabolite biosynthesis; terpenoid biosynthesis.</text>
</comment>
<comment type="induction">
    <text evidence="7">Expression is induced on AF medium.</text>
</comment>
<comment type="biotechnology">
    <text evidence="4 5 6">Ascofuranone is a specific inhibitor of trypanosome alternative oxidase (TAO), and quickly kills African trypanosomes in vitro and cures infected mice. As an essential factor for trypanosome survival, TAO is a promising drug target due to the absence of alternative oxidases in the mammalian host.</text>
</comment>
<comment type="similarity">
    <text evidence="10">Belongs to the short-chain dehydrogenases/reductases (SDR) family.</text>
</comment>
<protein>
    <recommendedName>
        <fullName evidence="9">Short-chain dehydrogenase/reductase ascJ</fullName>
        <ecNumber evidence="7 8">1.1.99.-</ecNumber>
    </recommendedName>
    <alternativeName>
        <fullName evidence="9">Ascofuranone/ascochlorin biosynthesis clusters protein J</fullName>
    </alternativeName>
</protein>
<organism>
    <name type="scientific">Acremonium egyptiacum</name>
    <name type="common">Oospora egyptiaca</name>
    <dbReference type="NCBI Taxonomy" id="749675"/>
    <lineage>
        <taxon>Eukaryota</taxon>
        <taxon>Fungi</taxon>
        <taxon>Dikarya</taxon>
        <taxon>Ascomycota</taxon>
        <taxon>Pezizomycotina</taxon>
        <taxon>Sordariomycetes</taxon>
        <taxon>Hypocreomycetidae</taxon>
        <taxon>Hypocreales</taxon>
        <taxon>Hypocreales incertae sedis</taxon>
        <taxon>Acremonium</taxon>
    </lineage>
</organism>
<name>ASCJ_ACREG</name>